<reference key="1">
    <citation type="journal article" date="2002" name="J. Biol. Chem.">
        <title>Cloning and characterization of human Siglec-11. A recently evolved signaling molecule that can interact with SHP-1 and SHP-2 and is expressed by tissue macrophages, including brain microglia.</title>
        <authorList>
            <person name="Angata T."/>
            <person name="Kerr S.C."/>
            <person name="Greaves D.R."/>
            <person name="Varki N.M."/>
            <person name="Crocker P.R."/>
            <person name="Varki A."/>
        </authorList>
    </citation>
    <scope>NUCLEOTIDE SEQUENCE [MRNA] (ISOFORM 1)</scope>
    <scope>INTERACTION WITH PTPN6 AND PTPN11</scope>
</reference>
<reference key="2">
    <citation type="journal article" date="2004" name="Nature">
        <title>The DNA sequence and biology of human chromosome 19.</title>
        <authorList>
            <person name="Grimwood J."/>
            <person name="Gordon L.A."/>
            <person name="Olsen A.S."/>
            <person name="Terry A."/>
            <person name="Schmutz J."/>
            <person name="Lamerdin J.E."/>
            <person name="Hellsten U."/>
            <person name="Goodstein D."/>
            <person name="Couronne O."/>
            <person name="Tran-Gyamfi M."/>
            <person name="Aerts A."/>
            <person name="Altherr M."/>
            <person name="Ashworth L."/>
            <person name="Bajorek E."/>
            <person name="Black S."/>
            <person name="Branscomb E."/>
            <person name="Caenepeel S."/>
            <person name="Carrano A.V."/>
            <person name="Caoile C."/>
            <person name="Chan Y.M."/>
            <person name="Christensen M."/>
            <person name="Cleland C.A."/>
            <person name="Copeland A."/>
            <person name="Dalin E."/>
            <person name="Dehal P."/>
            <person name="Denys M."/>
            <person name="Detter J.C."/>
            <person name="Escobar J."/>
            <person name="Flowers D."/>
            <person name="Fotopulos D."/>
            <person name="Garcia C."/>
            <person name="Georgescu A.M."/>
            <person name="Glavina T."/>
            <person name="Gomez M."/>
            <person name="Gonzales E."/>
            <person name="Groza M."/>
            <person name="Hammon N."/>
            <person name="Hawkins T."/>
            <person name="Haydu L."/>
            <person name="Ho I."/>
            <person name="Huang W."/>
            <person name="Israni S."/>
            <person name="Jett J."/>
            <person name="Kadner K."/>
            <person name="Kimball H."/>
            <person name="Kobayashi A."/>
            <person name="Larionov V."/>
            <person name="Leem S.-H."/>
            <person name="Lopez F."/>
            <person name="Lou Y."/>
            <person name="Lowry S."/>
            <person name="Malfatti S."/>
            <person name="Martinez D."/>
            <person name="McCready P.M."/>
            <person name="Medina C."/>
            <person name="Morgan J."/>
            <person name="Nelson K."/>
            <person name="Nolan M."/>
            <person name="Ovcharenko I."/>
            <person name="Pitluck S."/>
            <person name="Pollard M."/>
            <person name="Popkie A.P."/>
            <person name="Predki P."/>
            <person name="Quan G."/>
            <person name="Ramirez L."/>
            <person name="Rash S."/>
            <person name="Retterer J."/>
            <person name="Rodriguez A."/>
            <person name="Rogers S."/>
            <person name="Salamov A."/>
            <person name="Salazar A."/>
            <person name="She X."/>
            <person name="Smith D."/>
            <person name="Slezak T."/>
            <person name="Solovyev V."/>
            <person name="Thayer N."/>
            <person name="Tice H."/>
            <person name="Tsai M."/>
            <person name="Ustaszewska A."/>
            <person name="Vo N."/>
            <person name="Wagner M."/>
            <person name="Wheeler J."/>
            <person name="Wu K."/>
            <person name="Xie G."/>
            <person name="Yang J."/>
            <person name="Dubchak I."/>
            <person name="Furey T.S."/>
            <person name="DeJong P."/>
            <person name="Dickson M."/>
            <person name="Gordon D."/>
            <person name="Eichler E.E."/>
            <person name="Pennacchio L.A."/>
            <person name="Richardson P."/>
            <person name="Stubbs L."/>
            <person name="Rokhsar D.S."/>
            <person name="Myers R.M."/>
            <person name="Rubin E.M."/>
            <person name="Lucas S.M."/>
        </authorList>
    </citation>
    <scope>NUCLEOTIDE SEQUENCE [LARGE SCALE GENOMIC DNA]</scope>
</reference>
<reference key="3">
    <citation type="journal article" date="2003" name="Genome Res.">
        <title>The secreted protein discovery initiative (SPDI), a large-scale effort to identify novel human secreted and transmembrane proteins: a bioinformatics assessment.</title>
        <authorList>
            <person name="Clark H.F."/>
            <person name="Gurney A.L."/>
            <person name="Abaya E."/>
            <person name="Baker K."/>
            <person name="Baldwin D.T."/>
            <person name="Brush J."/>
            <person name="Chen J."/>
            <person name="Chow B."/>
            <person name="Chui C."/>
            <person name="Crowley C."/>
            <person name="Currell B."/>
            <person name="Deuel B."/>
            <person name="Dowd P."/>
            <person name="Eaton D."/>
            <person name="Foster J.S."/>
            <person name="Grimaldi C."/>
            <person name="Gu Q."/>
            <person name="Hass P.E."/>
            <person name="Heldens S."/>
            <person name="Huang A."/>
            <person name="Kim H.S."/>
            <person name="Klimowski L."/>
            <person name="Jin Y."/>
            <person name="Johnson S."/>
            <person name="Lee J."/>
            <person name="Lewis L."/>
            <person name="Liao D."/>
            <person name="Mark M.R."/>
            <person name="Robbie E."/>
            <person name="Sanchez C."/>
            <person name="Schoenfeld J."/>
            <person name="Seshagiri S."/>
            <person name="Simmons L."/>
            <person name="Singh J."/>
            <person name="Smith V."/>
            <person name="Stinson J."/>
            <person name="Vagts A."/>
            <person name="Vandlen R.L."/>
            <person name="Watanabe C."/>
            <person name="Wieand D."/>
            <person name="Woods K."/>
            <person name="Xie M.-H."/>
            <person name="Yansura D.G."/>
            <person name="Yi S."/>
            <person name="Yu G."/>
            <person name="Yuan J."/>
            <person name="Zhang M."/>
            <person name="Zhang Z."/>
            <person name="Goddard A.D."/>
            <person name="Wood W.I."/>
            <person name="Godowski P.J."/>
            <person name="Gray A.M."/>
        </authorList>
    </citation>
    <scope>PARTIAL NUCLEOTIDE SEQUENCE [LARGE SCALE MRNA] (ISOFORM 2)</scope>
</reference>
<comment type="function">
    <text>Putative adhesion molecule that mediates sialic-acid dependent binding to cells. Preferentially binds to alpha-2,8-linked sialic acid. The sialic acid recognition site may be masked by cis interactions with sialic acids on the same cell surface. In the immune response, may act as an inhibitory receptor upon ligand induced tyrosine phosphorylation by recruiting cytoplasmic phosphatase(s) via their SH2 domain(s) that block signal transduction through dephosphorylation of signaling molecules.</text>
</comment>
<comment type="subunit">
    <text evidence="6">Interacts with PTPN6/SHP-1 and PTPN11/SHP-2 upon phosphorylation.</text>
</comment>
<comment type="subcellular location">
    <subcellularLocation>
        <location>Membrane</location>
        <topology>Single-pass type I membrane protein</topology>
    </subcellularLocation>
</comment>
<comment type="alternative products">
    <event type="alternative splicing"/>
    <isoform>
        <id>Q96RL6-1</id>
        <name>1</name>
        <sequence type="displayed"/>
    </isoform>
    <isoform>
        <id>Q96RL6-2</id>
        <name>2</name>
        <sequence type="described" ref="VSP_008764"/>
    </isoform>
</comment>
<comment type="tissue specificity">
    <text>Expressed by macrophages in various tissues including Kupffer cells. Also found in brain microglia.</text>
</comment>
<comment type="domain">
    <text>Contains 1 copy of a cytoplasmic motif that is referred to as the immunoreceptor tyrosine-based inhibitor motif (ITIM). This motif is involved in modulation of cellular responses. The phosphorylated ITIM motif can bind the SH2 domain of several SH2-containing phosphatases.</text>
</comment>
<comment type="PTM">
    <text>Phosphorylated on tyrosine residues.</text>
</comment>
<comment type="similarity">
    <text evidence="7">Belongs to the immunoglobulin superfamily. SIGLEC (sialic acid binding Ig-like lectin) family.</text>
</comment>
<comment type="caution">
    <text evidence="7">It is uncertain whether Met-1 or Met-13 is the initiator.</text>
</comment>
<comment type="sequence caution" evidence="7">
    <conflict type="erroneous initiation">
        <sequence resource="EMBL-CDS" id="AAK72907"/>
    </conflict>
    <text>Truncated N-terminus.</text>
</comment>
<comment type="sequence caution" evidence="7">
    <conflict type="erroneous initiation">
        <sequence resource="EMBL-CDS" id="AAQ88502"/>
    </conflict>
    <text>Truncated N-terminus.</text>
</comment>
<name>SIG11_HUMAN</name>
<gene>
    <name type="primary">SIGLEC11</name>
    <name type="ORF">UNQ9222/PRO28718</name>
</gene>
<feature type="signal peptide" evidence="3">
    <location>
        <begin position="1"/>
        <end position="27"/>
    </location>
</feature>
<feature type="chain" id="PRO_0000014951" description="Sialic acid-binding Ig-like lectin 11">
    <location>
        <begin position="28"/>
        <end position="698"/>
    </location>
</feature>
<feature type="topological domain" description="Extracellular" evidence="3">
    <location>
        <begin position="28"/>
        <end position="561"/>
    </location>
</feature>
<feature type="transmembrane region" description="Helical" evidence="3">
    <location>
        <begin position="562"/>
        <end position="584"/>
    </location>
</feature>
<feature type="topological domain" description="Cytoplasmic" evidence="3">
    <location>
        <begin position="585"/>
        <end position="698"/>
    </location>
</feature>
<feature type="domain" description="Ig-like V-type">
    <location>
        <begin position="31"/>
        <end position="134"/>
    </location>
</feature>
<feature type="domain" description="Ig-like C2-type 1">
    <location>
        <begin position="159"/>
        <end position="244"/>
    </location>
</feature>
<feature type="domain" description="Ig-like C2-type 2">
    <location>
        <begin position="251"/>
        <end position="350"/>
    </location>
</feature>
<feature type="domain" description="Ig-like C2-type 3">
    <location>
        <begin position="355"/>
        <end position="452"/>
    </location>
</feature>
<feature type="region of interest" description="Disordered" evidence="5">
    <location>
        <begin position="596"/>
        <end position="635"/>
    </location>
</feature>
<feature type="region of interest" description="Disordered" evidence="5">
    <location>
        <begin position="675"/>
        <end position="698"/>
    </location>
</feature>
<feature type="short sequence motif" description="ITIM motif">
    <location>
        <begin position="642"/>
        <end position="647"/>
    </location>
</feature>
<feature type="binding site" evidence="1">
    <location>
        <position position="132"/>
    </location>
    <ligand>
        <name>N-acetylneuraminate</name>
        <dbReference type="ChEBI" id="CHEBI:35418"/>
    </ligand>
</feature>
<feature type="modified residue" description="Phosphotyrosine" evidence="2">
    <location>
        <position position="668"/>
    </location>
</feature>
<feature type="glycosylation site" description="N-linked (GlcNAc...) asparagine" evidence="3">
    <location>
        <position position="55"/>
    </location>
</feature>
<feature type="glycosylation site" description="N-linked (GlcNAc...) asparagine" evidence="3">
    <location>
        <position position="90"/>
    </location>
</feature>
<feature type="glycosylation site" description="N-linked (GlcNAc...) asparagine" evidence="3">
    <location>
        <position position="262"/>
    </location>
</feature>
<feature type="glycosylation site" description="N-linked (GlcNAc...) asparagine" evidence="3">
    <location>
        <position position="366"/>
    </location>
</feature>
<feature type="glycosylation site" description="N-linked (GlcNAc...) asparagine" evidence="3">
    <location>
        <position position="375"/>
    </location>
</feature>
<feature type="glycosylation site" description="N-linked (GlcNAc...) asparagine" evidence="3">
    <location>
        <position position="497"/>
    </location>
</feature>
<feature type="glycosylation site" description="N-linked (GlcNAc...) asparagine" evidence="3">
    <location>
        <position position="515"/>
    </location>
</feature>
<feature type="disulfide bond" evidence="4">
    <location>
        <begin position="49"/>
        <end position="186"/>
    </location>
</feature>
<feature type="disulfide bond" evidence="4">
    <location>
        <begin position="54"/>
        <end position="114"/>
    </location>
</feature>
<feature type="disulfide bond" evidence="4">
    <location>
        <begin position="177"/>
        <end position="228"/>
    </location>
</feature>
<feature type="disulfide bond" evidence="4">
    <location>
        <begin position="287"/>
        <end position="334"/>
    </location>
</feature>
<feature type="disulfide bond" evidence="4">
    <location>
        <begin position="391"/>
        <end position="436"/>
    </location>
</feature>
<feature type="splice variant" id="VSP_008764" description="In isoform 2." evidence="7">
    <original>YPPQLLGPSCSWEAEGLHCSCSSQASPAPSLRWWLGEELLEGNSSQGSFEVTPSSAGPWANSSLSLHGGLSSGLRLRCKAWNVHGAQSGSVFQLLPG</original>
    <variation>W</variation>
    <location>
        <begin position="455"/>
        <end position="551"/>
    </location>
</feature>
<feature type="sequence conflict" description="In Ref. 3; AAQ88502." evidence="7" ref="3">
    <original>E</original>
    <variation>A</variation>
    <location>
        <position position="96"/>
    </location>
</feature>
<feature type="sequence conflict" description="In Ref. 3; AAQ88502." evidence="7" ref="3">
    <original>A</original>
    <variation>G</variation>
    <location>
        <position position="365"/>
    </location>
</feature>
<evidence type="ECO:0000250" key="1"/>
<evidence type="ECO:0000250" key="2">
    <source>
        <dbReference type="UniProtKB" id="Q96LC7"/>
    </source>
</evidence>
<evidence type="ECO:0000255" key="3"/>
<evidence type="ECO:0000255" key="4">
    <source>
        <dbReference type="PROSITE-ProRule" id="PRU00114"/>
    </source>
</evidence>
<evidence type="ECO:0000256" key="5">
    <source>
        <dbReference type="SAM" id="MobiDB-lite"/>
    </source>
</evidence>
<evidence type="ECO:0000269" key="6">
    <source>
    </source>
</evidence>
<evidence type="ECO:0000305" key="7"/>
<dbReference type="EMBL" id="AF337818">
    <property type="protein sequence ID" value="AAK72907.1"/>
    <property type="status" value="ALT_INIT"/>
    <property type="molecule type" value="mRNA"/>
</dbReference>
<dbReference type="EMBL" id="AC011452">
    <property type="status" value="NOT_ANNOTATED_CDS"/>
    <property type="molecule type" value="Genomic_DNA"/>
</dbReference>
<dbReference type="EMBL" id="AY358135">
    <property type="protein sequence ID" value="AAQ88502.1"/>
    <property type="status" value="ALT_INIT"/>
    <property type="molecule type" value="mRNA"/>
</dbReference>
<dbReference type="CCDS" id="CCDS12790.2">
    <molecule id="Q96RL6-1"/>
</dbReference>
<dbReference type="CCDS" id="CCDS46150.1">
    <molecule id="Q96RL6-2"/>
</dbReference>
<dbReference type="RefSeq" id="NP_001128635.1">
    <molecule id="Q96RL6-2"/>
    <property type="nucleotide sequence ID" value="NM_001135163.1"/>
</dbReference>
<dbReference type="RefSeq" id="NP_443116.2">
    <molecule id="Q96RL6-1"/>
    <property type="nucleotide sequence ID" value="NM_052884.3"/>
</dbReference>
<dbReference type="SMR" id="Q96RL6"/>
<dbReference type="BioGRID" id="125285">
    <property type="interactions" value="5"/>
</dbReference>
<dbReference type="FunCoup" id="Q96RL6">
    <property type="interactions" value="284"/>
</dbReference>
<dbReference type="IntAct" id="Q96RL6">
    <property type="interactions" value="8"/>
</dbReference>
<dbReference type="STRING" id="9606.ENSP00000412361"/>
<dbReference type="GlyCosmos" id="Q96RL6">
    <property type="glycosylation" value="7 sites, No reported glycans"/>
</dbReference>
<dbReference type="GlyGen" id="Q96RL6">
    <property type="glycosylation" value="9 sites, 2 N-linked glycans (2 sites)"/>
</dbReference>
<dbReference type="iPTMnet" id="Q96RL6"/>
<dbReference type="PhosphoSitePlus" id="Q96RL6"/>
<dbReference type="SwissPalm" id="Q96RL6"/>
<dbReference type="BioMuta" id="SIGLEC11"/>
<dbReference type="DMDM" id="294862467"/>
<dbReference type="jPOST" id="Q96RL6"/>
<dbReference type="MassIVE" id="Q96RL6"/>
<dbReference type="PaxDb" id="9606-ENSP00000412361"/>
<dbReference type="PeptideAtlas" id="Q96RL6"/>
<dbReference type="ProteomicsDB" id="77982">
    <molecule id="Q96RL6-1"/>
</dbReference>
<dbReference type="ProteomicsDB" id="77983">
    <molecule id="Q96RL6-2"/>
</dbReference>
<dbReference type="Antibodypedia" id="32226">
    <property type="antibodies" value="209 antibodies from 30 providers"/>
</dbReference>
<dbReference type="DNASU" id="114132"/>
<dbReference type="Ensembl" id="ENST00000426971.2">
    <molecule id="Q96RL6-2"/>
    <property type="protein sequence ID" value="ENSP00000398891.2"/>
    <property type="gene ID" value="ENSG00000161640.15"/>
</dbReference>
<dbReference type="Ensembl" id="ENST00000447370.6">
    <molecule id="Q96RL6-1"/>
    <property type="protein sequence ID" value="ENSP00000412361.2"/>
    <property type="gene ID" value="ENSG00000161640.15"/>
</dbReference>
<dbReference type="GeneID" id="114132"/>
<dbReference type="KEGG" id="hsa:114132"/>
<dbReference type="MANE-Select" id="ENST00000447370.6">
    <property type="protein sequence ID" value="ENSP00000412361.2"/>
    <property type="RefSeq nucleotide sequence ID" value="NM_052884.3"/>
    <property type="RefSeq protein sequence ID" value="NP_443116.2"/>
</dbReference>
<dbReference type="UCSC" id="uc010ybh.3">
    <molecule id="Q96RL6-1"/>
    <property type="organism name" value="human"/>
</dbReference>
<dbReference type="AGR" id="HGNC:15622"/>
<dbReference type="CTD" id="114132"/>
<dbReference type="DisGeNET" id="114132"/>
<dbReference type="GeneCards" id="SIGLEC11"/>
<dbReference type="HGNC" id="HGNC:15622">
    <property type="gene designation" value="SIGLEC11"/>
</dbReference>
<dbReference type="HPA" id="ENSG00000161640">
    <property type="expression patterns" value="Group enriched (lymphoid tissue, ovary)"/>
</dbReference>
<dbReference type="MIM" id="607157">
    <property type="type" value="gene"/>
</dbReference>
<dbReference type="neXtProt" id="NX_Q96RL6"/>
<dbReference type="NIAGADS" id="ENSG00000161640"/>
<dbReference type="OpenTargets" id="ENSG00000161640"/>
<dbReference type="PharmGKB" id="PA38005"/>
<dbReference type="VEuPathDB" id="HostDB:ENSG00000161640"/>
<dbReference type="eggNOG" id="ENOG502S41V">
    <property type="taxonomic scope" value="Eukaryota"/>
</dbReference>
<dbReference type="GeneTree" id="ENSGT01080000257333"/>
<dbReference type="HOGENOM" id="CLU_024444_5_1_1"/>
<dbReference type="InParanoid" id="Q96RL6"/>
<dbReference type="OMA" id="DCSLMIR"/>
<dbReference type="OrthoDB" id="10039395at2759"/>
<dbReference type="PAN-GO" id="Q96RL6">
    <property type="GO annotations" value="3 GO annotations based on evolutionary models"/>
</dbReference>
<dbReference type="PhylomeDB" id="Q96RL6"/>
<dbReference type="TreeFam" id="TF332441"/>
<dbReference type="PathwayCommons" id="Q96RL6"/>
<dbReference type="Reactome" id="R-HSA-198933">
    <property type="pathway name" value="Immunoregulatory interactions between a Lymphoid and a non-Lymphoid cell"/>
</dbReference>
<dbReference type="SignaLink" id="Q96RL6"/>
<dbReference type="BioGRID-ORCS" id="114132">
    <property type="hits" value="68 hits in 1142 CRISPR screens"/>
</dbReference>
<dbReference type="GenomeRNAi" id="114132"/>
<dbReference type="Pharos" id="Q96RL6">
    <property type="development level" value="Tbio"/>
</dbReference>
<dbReference type="PRO" id="PR:Q96RL6"/>
<dbReference type="Proteomes" id="UP000005640">
    <property type="component" value="Chromosome 19"/>
</dbReference>
<dbReference type="RNAct" id="Q96RL6">
    <property type="molecule type" value="protein"/>
</dbReference>
<dbReference type="Bgee" id="ENSG00000161640">
    <property type="expression patterns" value="Expressed in adrenal tissue and 107 other cell types or tissues"/>
</dbReference>
<dbReference type="ExpressionAtlas" id="Q96RL6">
    <property type="expression patterns" value="baseline and differential"/>
</dbReference>
<dbReference type="GO" id="GO:0005886">
    <property type="term" value="C:plasma membrane"/>
    <property type="evidence" value="ECO:0000318"/>
    <property type="project" value="GO_Central"/>
</dbReference>
<dbReference type="GO" id="GO:0030246">
    <property type="term" value="F:carbohydrate binding"/>
    <property type="evidence" value="ECO:0007669"/>
    <property type="project" value="UniProtKB-KW"/>
</dbReference>
<dbReference type="GO" id="GO:0019902">
    <property type="term" value="F:phosphatase binding"/>
    <property type="evidence" value="ECO:0000353"/>
    <property type="project" value="UniProtKB"/>
</dbReference>
<dbReference type="GO" id="GO:0033691">
    <property type="term" value="F:sialic acid binding"/>
    <property type="evidence" value="ECO:0000314"/>
    <property type="project" value="UniProtKB"/>
</dbReference>
<dbReference type="GO" id="GO:0007155">
    <property type="term" value="P:cell adhesion"/>
    <property type="evidence" value="ECO:0000318"/>
    <property type="project" value="GO_Central"/>
</dbReference>
<dbReference type="CDD" id="cd20987">
    <property type="entry name" value="IgC2_CD33_d2_like"/>
    <property type="match status" value="1"/>
</dbReference>
<dbReference type="CDD" id="cd05712">
    <property type="entry name" value="IgV_CD33"/>
    <property type="match status" value="1"/>
</dbReference>
<dbReference type="FunFam" id="2.60.40.10:FF:000994">
    <property type="entry name" value="Sialic acid binding Ig like lectin 10"/>
    <property type="match status" value="2"/>
</dbReference>
<dbReference type="FunFam" id="2.60.40.10:FF:001242">
    <property type="entry name" value="Sialic acid binding Ig like lectin 11"/>
    <property type="match status" value="1"/>
</dbReference>
<dbReference type="FunFam" id="2.60.40.10:FF:000829">
    <property type="entry name" value="Sialic acid-binding Ig-like lectin 8"/>
    <property type="match status" value="1"/>
</dbReference>
<dbReference type="Gene3D" id="2.60.40.10">
    <property type="entry name" value="Immunoglobulins"/>
    <property type="match status" value="4"/>
</dbReference>
<dbReference type="InterPro" id="IPR007110">
    <property type="entry name" value="Ig-like_dom"/>
</dbReference>
<dbReference type="InterPro" id="IPR036179">
    <property type="entry name" value="Ig-like_dom_sf"/>
</dbReference>
<dbReference type="InterPro" id="IPR013783">
    <property type="entry name" value="Ig-like_fold"/>
</dbReference>
<dbReference type="InterPro" id="IPR003006">
    <property type="entry name" value="Ig/MHC_CS"/>
</dbReference>
<dbReference type="InterPro" id="IPR013098">
    <property type="entry name" value="Ig_I-set"/>
</dbReference>
<dbReference type="InterPro" id="IPR003599">
    <property type="entry name" value="Ig_sub"/>
</dbReference>
<dbReference type="InterPro" id="IPR003598">
    <property type="entry name" value="Ig_sub2"/>
</dbReference>
<dbReference type="InterPro" id="IPR013106">
    <property type="entry name" value="Ig_V-set"/>
</dbReference>
<dbReference type="InterPro" id="IPR051036">
    <property type="entry name" value="SIGLEC"/>
</dbReference>
<dbReference type="PANTHER" id="PTHR12035">
    <property type="entry name" value="SIALIC ACID BINDING IMMUNOGLOBULIN-LIKE LECTIN"/>
    <property type="match status" value="1"/>
</dbReference>
<dbReference type="PANTHER" id="PTHR12035:SF127">
    <property type="entry name" value="SIALIC ACID-BINDING IG-LIKE LECTIN 11"/>
    <property type="match status" value="1"/>
</dbReference>
<dbReference type="Pfam" id="PF07679">
    <property type="entry name" value="I-set"/>
    <property type="match status" value="1"/>
</dbReference>
<dbReference type="Pfam" id="PF13927">
    <property type="entry name" value="Ig_3"/>
    <property type="match status" value="1"/>
</dbReference>
<dbReference type="Pfam" id="PF07686">
    <property type="entry name" value="V-set"/>
    <property type="match status" value="1"/>
</dbReference>
<dbReference type="SMART" id="SM00409">
    <property type="entry name" value="IG"/>
    <property type="match status" value="4"/>
</dbReference>
<dbReference type="SMART" id="SM00408">
    <property type="entry name" value="IGc2"/>
    <property type="match status" value="2"/>
</dbReference>
<dbReference type="SUPFAM" id="SSF48726">
    <property type="entry name" value="Immunoglobulin"/>
    <property type="match status" value="5"/>
</dbReference>
<dbReference type="PROSITE" id="PS50835">
    <property type="entry name" value="IG_LIKE"/>
    <property type="match status" value="3"/>
</dbReference>
<dbReference type="PROSITE" id="PS00290">
    <property type="entry name" value="IG_MHC"/>
    <property type="match status" value="1"/>
</dbReference>
<sequence length="698" mass="75795">MVPGQAQPQSPEMLLLPLLLPVLGAGSLNKDPSYSLQVQRQVPVPEGLCVIVSCNLSYPRDGWDESTAAYGYWFKGRTSPKTGAPVATNNQSREVEMSTRDRFQLTGDPGKGSCSLVIRDAQREDEAWYFFRVERGSRVRHSFLSNAFFLKVTALTKKPDVYIPETLEPGQPVTVICVFNWAFKKCPAPSFSWTGAALSPRRTRPSTSHFSVLSFTPSPQDHDTDLTCHVDFSRKGVSAQRTVRLRVAYAPKDLIISISHDNTSALELQGNVIYLEVQKGQFLRLLCAADSQPPATLSWVLQDRVLSSSHPWGPRTLGLELRGVRAGDSGRYTCRAENRLGSQQQALDLSVQYPPENLRVMVSQANRTVLENLGNGTSLPVLEGQSLRLVCVTHSSPPARLSWTRWGQTVGPSQPSDPGVLELPPIQMEHEGEFTCHAQHPLGSQHVSLSLSVHYPPQLLGPSCSWEAEGLHCSCSSQASPAPSLRWWLGEELLEGNSSQGSFEVTPSSAGPWANSSLSLHGGLSSGLRLRCKAWNVHGAQSGSVFQLLPGKLEHGGGLGLGAALGAGVAALLAFCSCLVVFRVKICRKEARKRAAAEQDVPSTLGPISQGHQHECSAGSSQDHPPPGAATYTPGKGEEQELHYASLSFQGLRLWEPADQEAPSTTEYSEIKIHTGQPLRGPGFGLQLEREMSGMVPK</sequence>
<protein>
    <recommendedName>
        <fullName>Sialic acid-binding Ig-like lectin 11</fullName>
        <shortName>Sialic acid-binding lectin 11</shortName>
        <shortName>Siglec-11</shortName>
    </recommendedName>
</protein>
<keyword id="KW-0025">Alternative splicing</keyword>
<keyword id="KW-0130">Cell adhesion</keyword>
<keyword id="KW-1015">Disulfide bond</keyword>
<keyword id="KW-0325">Glycoprotein</keyword>
<keyword id="KW-0393">Immunoglobulin domain</keyword>
<keyword id="KW-0430">Lectin</keyword>
<keyword id="KW-0472">Membrane</keyword>
<keyword id="KW-0597">Phosphoprotein</keyword>
<keyword id="KW-1185">Reference proteome</keyword>
<keyword id="KW-0677">Repeat</keyword>
<keyword id="KW-0732">Signal</keyword>
<keyword id="KW-0812">Transmembrane</keyword>
<keyword id="KW-1133">Transmembrane helix</keyword>
<accession>Q96RL6</accession>
<proteinExistence type="evidence at protein level"/>
<organism>
    <name type="scientific">Homo sapiens</name>
    <name type="common">Human</name>
    <dbReference type="NCBI Taxonomy" id="9606"/>
    <lineage>
        <taxon>Eukaryota</taxon>
        <taxon>Metazoa</taxon>
        <taxon>Chordata</taxon>
        <taxon>Craniata</taxon>
        <taxon>Vertebrata</taxon>
        <taxon>Euteleostomi</taxon>
        <taxon>Mammalia</taxon>
        <taxon>Eutheria</taxon>
        <taxon>Euarchontoglires</taxon>
        <taxon>Primates</taxon>
        <taxon>Haplorrhini</taxon>
        <taxon>Catarrhini</taxon>
        <taxon>Hominidae</taxon>
        <taxon>Homo</taxon>
    </lineage>
</organism>